<reference key="1">
    <citation type="journal article" date="2005" name="Nat. Biotechnol.">
        <title>The genome sequence of the ethanologenic bacterium Zymomonas mobilis ZM4.</title>
        <authorList>
            <person name="Seo J.-S."/>
            <person name="Chong H."/>
            <person name="Park H.S."/>
            <person name="Yoon K.-O."/>
            <person name="Jung C."/>
            <person name="Kim J.J."/>
            <person name="Hong J.H."/>
            <person name="Kim H."/>
            <person name="Kim J.-H."/>
            <person name="Kil J.-I."/>
            <person name="Park C.J."/>
            <person name="Oh H.-M."/>
            <person name="Lee J.-S."/>
            <person name="Jin S.-J."/>
            <person name="Um H.-W."/>
            <person name="Lee H.-J."/>
            <person name="Oh S.-J."/>
            <person name="Kim J.Y."/>
            <person name="Kang H.L."/>
            <person name="Lee S.Y."/>
            <person name="Lee K.J."/>
            <person name="Kang H.S."/>
        </authorList>
    </citation>
    <scope>NUCLEOTIDE SEQUENCE [LARGE SCALE GENOMIC DNA]</scope>
    <source>
        <strain>ATCC 31821 / ZM4 / CP4</strain>
    </source>
</reference>
<gene>
    <name type="ordered locus">ZMO1013</name>
</gene>
<accession>Q5NNS3</accession>
<dbReference type="EC" id="3.6.1.9" evidence="1"/>
<dbReference type="EMBL" id="AE008692">
    <property type="protein sequence ID" value="AAV89637.1"/>
    <property type="molecule type" value="Genomic_DNA"/>
</dbReference>
<dbReference type="RefSeq" id="WP_011240862.1">
    <property type="nucleotide sequence ID" value="NZ_CP035711.1"/>
</dbReference>
<dbReference type="SMR" id="Q5NNS3"/>
<dbReference type="STRING" id="264203.ZMO1013"/>
<dbReference type="KEGG" id="zmo:ZMO1013"/>
<dbReference type="eggNOG" id="COG0424">
    <property type="taxonomic scope" value="Bacteria"/>
</dbReference>
<dbReference type="HOGENOM" id="CLU_040416_2_0_5"/>
<dbReference type="Proteomes" id="UP000001173">
    <property type="component" value="Chromosome"/>
</dbReference>
<dbReference type="GO" id="GO:0005737">
    <property type="term" value="C:cytoplasm"/>
    <property type="evidence" value="ECO:0007669"/>
    <property type="project" value="UniProtKB-SubCell"/>
</dbReference>
<dbReference type="GO" id="GO:0036218">
    <property type="term" value="F:dTTP diphosphatase activity"/>
    <property type="evidence" value="ECO:0007669"/>
    <property type="project" value="RHEA"/>
</dbReference>
<dbReference type="GO" id="GO:0036221">
    <property type="term" value="F:UTP diphosphatase activity"/>
    <property type="evidence" value="ECO:0007669"/>
    <property type="project" value="RHEA"/>
</dbReference>
<dbReference type="GO" id="GO:0009117">
    <property type="term" value="P:nucleotide metabolic process"/>
    <property type="evidence" value="ECO:0007669"/>
    <property type="project" value="UniProtKB-KW"/>
</dbReference>
<dbReference type="CDD" id="cd00555">
    <property type="entry name" value="Maf"/>
    <property type="match status" value="1"/>
</dbReference>
<dbReference type="Gene3D" id="3.90.950.10">
    <property type="match status" value="1"/>
</dbReference>
<dbReference type="HAMAP" id="MF_00528">
    <property type="entry name" value="Maf"/>
    <property type="match status" value="1"/>
</dbReference>
<dbReference type="InterPro" id="IPR029001">
    <property type="entry name" value="ITPase-like_fam"/>
</dbReference>
<dbReference type="InterPro" id="IPR003697">
    <property type="entry name" value="Maf-like"/>
</dbReference>
<dbReference type="NCBIfam" id="TIGR00172">
    <property type="entry name" value="maf"/>
    <property type="match status" value="1"/>
</dbReference>
<dbReference type="PANTHER" id="PTHR43213">
    <property type="entry name" value="BIFUNCTIONAL DTTP/UTP PYROPHOSPHATASE/METHYLTRANSFERASE PROTEIN-RELATED"/>
    <property type="match status" value="1"/>
</dbReference>
<dbReference type="PANTHER" id="PTHR43213:SF5">
    <property type="entry name" value="BIFUNCTIONAL DTTP_UTP PYROPHOSPHATASE_METHYLTRANSFERASE PROTEIN-RELATED"/>
    <property type="match status" value="1"/>
</dbReference>
<dbReference type="Pfam" id="PF02545">
    <property type="entry name" value="Maf"/>
    <property type="match status" value="1"/>
</dbReference>
<dbReference type="PIRSF" id="PIRSF006305">
    <property type="entry name" value="Maf"/>
    <property type="match status" value="1"/>
</dbReference>
<dbReference type="SUPFAM" id="SSF52972">
    <property type="entry name" value="ITPase-like"/>
    <property type="match status" value="1"/>
</dbReference>
<name>NTPPA_ZYMMO</name>
<sequence length="202" mass="22170">MASSLILASASPRRLALLARIGIKPELVLPADIDETPKKGELPLEYVRRMATEKAEWVASRHSECHILAADTVVAAGRRILPKAEDEKQATSYLKLLSGRRHRVLTAVAMQKDDAPTTVKVSSNIVTFKSLSPREIEDYVASGEWRGKAGGYAIQGYAESFIRFLAGSHSSVMGLPLYETRHLLMNAGWPISASSSFQEEYA</sequence>
<proteinExistence type="inferred from homology"/>
<feature type="chain" id="PRO_0000267479" description="dTTP/UTP pyrophosphatase">
    <location>
        <begin position="1"/>
        <end position="202"/>
    </location>
</feature>
<feature type="active site" description="Proton acceptor" evidence="1">
    <location>
        <position position="71"/>
    </location>
</feature>
<feature type="site" description="Important for substrate specificity" evidence="1">
    <location>
        <position position="13"/>
    </location>
</feature>
<feature type="site" description="Important for substrate specificity" evidence="1">
    <location>
        <position position="72"/>
    </location>
</feature>
<feature type="site" description="Important for substrate specificity" evidence="1">
    <location>
        <position position="155"/>
    </location>
</feature>
<evidence type="ECO:0000255" key="1">
    <source>
        <dbReference type="HAMAP-Rule" id="MF_00528"/>
    </source>
</evidence>
<comment type="function">
    <text evidence="1">Nucleoside triphosphate pyrophosphatase that hydrolyzes dTTP and UTP. May have a dual role in cell division arrest and in preventing the incorporation of modified nucleotides into cellular nucleic acids.</text>
</comment>
<comment type="catalytic activity">
    <reaction evidence="1">
        <text>dTTP + H2O = dTMP + diphosphate + H(+)</text>
        <dbReference type="Rhea" id="RHEA:28534"/>
        <dbReference type="ChEBI" id="CHEBI:15377"/>
        <dbReference type="ChEBI" id="CHEBI:15378"/>
        <dbReference type="ChEBI" id="CHEBI:33019"/>
        <dbReference type="ChEBI" id="CHEBI:37568"/>
        <dbReference type="ChEBI" id="CHEBI:63528"/>
        <dbReference type="EC" id="3.6.1.9"/>
    </reaction>
</comment>
<comment type="catalytic activity">
    <reaction evidence="1">
        <text>UTP + H2O = UMP + diphosphate + H(+)</text>
        <dbReference type="Rhea" id="RHEA:29395"/>
        <dbReference type="ChEBI" id="CHEBI:15377"/>
        <dbReference type="ChEBI" id="CHEBI:15378"/>
        <dbReference type="ChEBI" id="CHEBI:33019"/>
        <dbReference type="ChEBI" id="CHEBI:46398"/>
        <dbReference type="ChEBI" id="CHEBI:57865"/>
        <dbReference type="EC" id="3.6.1.9"/>
    </reaction>
</comment>
<comment type="cofactor">
    <cofactor evidence="1">
        <name>a divalent metal cation</name>
        <dbReference type="ChEBI" id="CHEBI:60240"/>
    </cofactor>
</comment>
<comment type="subcellular location">
    <subcellularLocation>
        <location evidence="1">Cytoplasm</location>
    </subcellularLocation>
</comment>
<comment type="similarity">
    <text evidence="1">Belongs to the Maf family. YhdE subfamily.</text>
</comment>
<protein>
    <recommendedName>
        <fullName evidence="1">dTTP/UTP pyrophosphatase</fullName>
        <shortName evidence="1">dTTPase/UTPase</shortName>
        <ecNumber evidence="1">3.6.1.9</ecNumber>
    </recommendedName>
    <alternativeName>
        <fullName evidence="1">Nucleoside triphosphate pyrophosphatase</fullName>
    </alternativeName>
    <alternativeName>
        <fullName evidence="1">Nucleotide pyrophosphatase</fullName>
        <shortName evidence="1">Nucleotide PPase</shortName>
    </alternativeName>
</protein>
<keyword id="KW-0963">Cytoplasm</keyword>
<keyword id="KW-0378">Hydrolase</keyword>
<keyword id="KW-0546">Nucleotide metabolism</keyword>
<keyword id="KW-1185">Reference proteome</keyword>
<organism>
    <name type="scientific">Zymomonas mobilis subsp. mobilis (strain ATCC 31821 / ZM4 / CP4)</name>
    <dbReference type="NCBI Taxonomy" id="264203"/>
    <lineage>
        <taxon>Bacteria</taxon>
        <taxon>Pseudomonadati</taxon>
        <taxon>Pseudomonadota</taxon>
        <taxon>Alphaproteobacteria</taxon>
        <taxon>Sphingomonadales</taxon>
        <taxon>Zymomonadaceae</taxon>
        <taxon>Zymomonas</taxon>
    </lineage>
</organism>